<accession>A4SVI8</accession>
<organism>
    <name type="scientific">Polynucleobacter asymbioticus (strain DSM 18221 / CIP 109841 / QLW-P1DMWA-1)</name>
    <name type="common">Polynucleobacter necessarius subsp. asymbioticus</name>
    <dbReference type="NCBI Taxonomy" id="312153"/>
    <lineage>
        <taxon>Bacteria</taxon>
        <taxon>Pseudomonadati</taxon>
        <taxon>Pseudomonadota</taxon>
        <taxon>Betaproteobacteria</taxon>
        <taxon>Burkholderiales</taxon>
        <taxon>Burkholderiaceae</taxon>
        <taxon>Polynucleobacter</taxon>
    </lineage>
</organism>
<keyword id="KW-0067">ATP-binding</keyword>
<keyword id="KW-0963">Cytoplasm</keyword>
<keyword id="KW-0418">Kinase</keyword>
<keyword id="KW-0545">Nucleotide biosynthesis</keyword>
<keyword id="KW-0547">Nucleotide-binding</keyword>
<keyword id="KW-1185">Reference proteome</keyword>
<keyword id="KW-0808">Transferase</keyword>
<name>KAD_POLAQ</name>
<comment type="function">
    <text evidence="1">Catalyzes the reversible transfer of the terminal phosphate group between ATP and AMP. Plays an important role in cellular energy homeostasis and in adenine nucleotide metabolism.</text>
</comment>
<comment type="catalytic activity">
    <reaction evidence="1">
        <text>AMP + ATP = 2 ADP</text>
        <dbReference type="Rhea" id="RHEA:12973"/>
        <dbReference type="ChEBI" id="CHEBI:30616"/>
        <dbReference type="ChEBI" id="CHEBI:456215"/>
        <dbReference type="ChEBI" id="CHEBI:456216"/>
        <dbReference type="EC" id="2.7.4.3"/>
    </reaction>
</comment>
<comment type="pathway">
    <text evidence="1">Purine metabolism; AMP biosynthesis via salvage pathway; AMP from ADP: step 1/1.</text>
</comment>
<comment type="subunit">
    <text evidence="1">Monomer.</text>
</comment>
<comment type="subcellular location">
    <subcellularLocation>
        <location evidence="1">Cytoplasm</location>
    </subcellularLocation>
</comment>
<comment type="domain">
    <text evidence="1">Consists of three domains, a large central CORE domain and two small peripheral domains, NMPbind and LID, which undergo movements during catalysis. The LID domain closes over the site of phosphoryl transfer upon ATP binding. Assembling and dissambling the active center during each catalytic cycle provides an effective means to prevent ATP hydrolysis.</text>
</comment>
<comment type="similarity">
    <text evidence="1">Belongs to the adenylate kinase family.</text>
</comment>
<reference key="1">
    <citation type="journal article" date="2012" name="Stand. Genomic Sci.">
        <title>Complete genome sequence of Polynucleobacter necessarius subsp. asymbioticus type strain (QLW-P1DMWA-1(T)).</title>
        <authorList>
            <person name="Meincke L."/>
            <person name="Copeland A."/>
            <person name="Lapidus A."/>
            <person name="Lucas S."/>
            <person name="Berry K.W."/>
            <person name="Del Rio T.G."/>
            <person name="Hammon N."/>
            <person name="Dalin E."/>
            <person name="Tice H."/>
            <person name="Pitluck S."/>
            <person name="Richardson P."/>
            <person name="Bruce D."/>
            <person name="Goodwin L."/>
            <person name="Han C."/>
            <person name="Tapia R."/>
            <person name="Detter J.C."/>
            <person name="Schmutz J."/>
            <person name="Brettin T."/>
            <person name="Larimer F."/>
            <person name="Land M."/>
            <person name="Hauser L."/>
            <person name="Kyrpides N.C."/>
            <person name="Ivanova N."/>
            <person name="Goker M."/>
            <person name="Woyke T."/>
            <person name="Wu Q.L."/>
            <person name="Pockl M."/>
            <person name="Hahn M.W."/>
            <person name="Klenk H.P."/>
        </authorList>
    </citation>
    <scope>NUCLEOTIDE SEQUENCE [LARGE SCALE GENOMIC DNA]</scope>
    <source>
        <strain>DSM 18221 / CIP 109841 / QLW-P1DMWA-1</strain>
    </source>
</reference>
<dbReference type="EC" id="2.7.4.3" evidence="1"/>
<dbReference type="EMBL" id="CP000655">
    <property type="protein sequence ID" value="ABP33502.1"/>
    <property type="molecule type" value="Genomic_DNA"/>
</dbReference>
<dbReference type="RefSeq" id="WP_011902127.1">
    <property type="nucleotide sequence ID" value="NC_009379.1"/>
</dbReference>
<dbReference type="SMR" id="A4SVI8"/>
<dbReference type="GeneID" id="31480631"/>
<dbReference type="KEGG" id="pnu:Pnuc_0281"/>
<dbReference type="eggNOG" id="COG0563">
    <property type="taxonomic scope" value="Bacteria"/>
</dbReference>
<dbReference type="HOGENOM" id="CLU_032354_1_2_4"/>
<dbReference type="UniPathway" id="UPA00588">
    <property type="reaction ID" value="UER00649"/>
</dbReference>
<dbReference type="Proteomes" id="UP000000231">
    <property type="component" value="Chromosome"/>
</dbReference>
<dbReference type="GO" id="GO:0005737">
    <property type="term" value="C:cytoplasm"/>
    <property type="evidence" value="ECO:0007669"/>
    <property type="project" value="UniProtKB-SubCell"/>
</dbReference>
<dbReference type="GO" id="GO:0004017">
    <property type="term" value="F:adenylate kinase activity"/>
    <property type="evidence" value="ECO:0007669"/>
    <property type="project" value="UniProtKB-UniRule"/>
</dbReference>
<dbReference type="GO" id="GO:0005524">
    <property type="term" value="F:ATP binding"/>
    <property type="evidence" value="ECO:0007669"/>
    <property type="project" value="UniProtKB-UniRule"/>
</dbReference>
<dbReference type="GO" id="GO:0044209">
    <property type="term" value="P:AMP salvage"/>
    <property type="evidence" value="ECO:0007669"/>
    <property type="project" value="UniProtKB-UniRule"/>
</dbReference>
<dbReference type="CDD" id="cd01428">
    <property type="entry name" value="ADK"/>
    <property type="match status" value="1"/>
</dbReference>
<dbReference type="FunFam" id="3.40.50.300:FF:000106">
    <property type="entry name" value="Adenylate kinase mitochondrial"/>
    <property type="match status" value="1"/>
</dbReference>
<dbReference type="Gene3D" id="3.40.50.300">
    <property type="entry name" value="P-loop containing nucleotide triphosphate hydrolases"/>
    <property type="match status" value="1"/>
</dbReference>
<dbReference type="HAMAP" id="MF_00235">
    <property type="entry name" value="Adenylate_kinase_Adk"/>
    <property type="match status" value="1"/>
</dbReference>
<dbReference type="InterPro" id="IPR006259">
    <property type="entry name" value="Adenyl_kin_sub"/>
</dbReference>
<dbReference type="InterPro" id="IPR000850">
    <property type="entry name" value="Adenylat/UMP-CMP_kin"/>
</dbReference>
<dbReference type="InterPro" id="IPR033690">
    <property type="entry name" value="Adenylat_kinase_CS"/>
</dbReference>
<dbReference type="InterPro" id="IPR007862">
    <property type="entry name" value="Adenylate_kinase_lid-dom"/>
</dbReference>
<dbReference type="InterPro" id="IPR027417">
    <property type="entry name" value="P-loop_NTPase"/>
</dbReference>
<dbReference type="NCBIfam" id="TIGR01351">
    <property type="entry name" value="adk"/>
    <property type="match status" value="1"/>
</dbReference>
<dbReference type="NCBIfam" id="NF001379">
    <property type="entry name" value="PRK00279.1-1"/>
    <property type="match status" value="1"/>
</dbReference>
<dbReference type="NCBIfam" id="NF001380">
    <property type="entry name" value="PRK00279.1-2"/>
    <property type="match status" value="1"/>
</dbReference>
<dbReference type="NCBIfam" id="NF001381">
    <property type="entry name" value="PRK00279.1-3"/>
    <property type="match status" value="1"/>
</dbReference>
<dbReference type="PANTHER" id="PTHR23359">
    <property type="entry name" value="NUCLEOTIDE KINASE"/>
    <property type="match status" value="1"/>
</dbReference>
<dbReference type="Pfam" id="PF00406">
    <property type="entry name" value="ADK"/>
    <property type="match status" value="1"/>
</dbReference>
<dbReference type="Pfam" id="PF05191">
    <property type="entry name" value="ADK_lid"/>
    <property type="match status" value="1"/>
</dbReference>
<dbReference type="PRINTS" id="PR00094">
    <property type="entry name" value="ADENYLTKNASE"/>
</dbReference>
<dbReference type="SUPFAM" id="SSF52540">
    <property type="entry name" value="P-loop containing nucleoside triphosphate hydrolases"/>
    <property type="match status" value="1"/>
</dbReference>
<dbReference type="PROSITE" id="PS00113">
    <property type="entry name" value="ADENYLATE_KINASE"/>
    <property type="match status" value="1"/>
</dbReference>
<evidence type="ECO:0000255" key="1">
    <source>
        <dbReference type="HAMAP-Rule" id="MF_00235"/>
    </source>
</evidence>
<gene>
    <name evidence="1" type="primary">adk</name>
    <name type="ordered locus">Pnuc_0281</name>
</gene>
<feature type="chain" id="PRO_1000078284" description="Adenylate kinase">
    <location>
        <begin position="1"/>
        <end position="221"/>
    </location>
</feature>
<feature type="region of interest" description="NMP" evidence="1">
    <location>
        <begin position="30"/>
        <end position="59"/>
    </location>
</feature>
<feature type="region of interest" description="LID" evidence="1">
    <location>
        <begin position="122"/>
        <end position="159"/>
    </location>
</feature>
<feature type="binding site" evidence="1">
    <location>
        <begin position="10"/>
        <end position="15"/>
    </location>
    <ligand>
        <name>ATP</name>
        <dbReference type="ChEBI" id="CHEBI:30616"/>
    </ligand>
</feature>
<feature type="binding site" evidence="1">
    <location>
        <position position="31"/>
    </location>
    <ligand>
        <name>AMP</name>
        <dbReference type="ChEBI" id="CHEBI:456215"/>
    </ligand>
</feature>
<feature type="binding site" evidence="1">
    <location>
        <position position="36"/>
    </location>
    <ligand>
        <name>AMP</name>
        <dbReference type="ChEBI" id="CHEBI:456215"/>
    </ligand>
</feature>
<feature type="binding site" evidence="1">
    <location>
        <begin position="57"/>
        <end position="59"/>
    </location>
    <ligand>
        <name>AMP</name>
        <dbReference type="ChEBI" id="CHEBI:456215"/>
    </ligand>
</feature>
<feature type="binding site" evidence="1">
    <location>
        <begin position="85"/>
        <end position="88"/>
    </location>
    <ligand>
        <name>AMP</name>
        <dbReference type="ChEBI" id="CHEBI:456215"/>
    </ligand>
</feature>
<feature type="binding site" evidence="1">
    <location>
        <position position="92"/>
    </location>
    <ligand>
        <name>AMP</name>
        <dbReference type="ChEBI" id="CHEBI:456215"/>
    </ligand>
</feature>
<feature type="binding site" evidence="1">
    <location>
        <position position="123"/>
    </location>
    <ligand>
        <name>ATP</name>
        <dbReference type="ChEBI" id="CHEBI:30616"/>
    </ligand>
</feature>
<feature type="binding site" evidence="1">
    <location>
        <begin position="132"/>
        <end position="133"/>
    </location>
    <ligand>
        <name>ATP</name>
        <dbReference type="ChEBI" id="CHEBI:30616"/>
    </ligand>
</feature>
<feature type="binding site" evidence="1">
    <location>
        <position position="156"/>
    </location>
    <ligand>
        <name>AMP</name>
        <dbReference type="ChEBI" id="CHEBI:456215"/>
    </ligand>
</feature>
<feature type="binding site" evidence="1">
    <location>
        <position position="167"/>
    </location>
    <ligand>
        <name>AMP</name>
        <dbReference type="ChEBI" id="CHEBI:456215"/>
    </ligand>
</feature>
<feature type="binding site" evidence="1">
    <location>
        <position position="207"/>
    </location>
    <ligand>
        <name>ATP</name>
        <dbReference type="ChEBI" id="CHEBI:30616"/>
    </ligand>
</feature>
<protein>
    <recommendedName>
        <fullName evidence="1">Adenylate kinase</fullName>
        <shortName evidence="1">AK</shortName>
        <ecNumber evidence="1">2.7.4.3</ecNumber>
    </recommendedName>
    <alternativeName>
        <fullName evidence="1">ATP-AMP transphosphorylase</fullName>
    </alternativeName>
    <alternativeName>
        <fullName evidence="1">ATP:AMP phosphotransferase</fullName>
    </alternativeName>
    <alternativeName>
        <fullName evidence="1">Adenylate monophosphate kinase</fullName>
    </alternativeName>
</protein>
<proteinExistence type="inferred from homology"/>
<sequence>MRLILLGAPGAGKGTQAQFICEKFAIPQISTGDMLRAAVKAGTEFGVAAKKIMDAGGLVSDDIIIGLVKDRLTQPDCSKGYLFDGFPRTIPQAQAMKDAGVPIDYVLEIDVPFDAIIDRMGGRRVHPASGRTYHIKYNPPKVEGKDDVTGDALIQRDDDKEETVRKRLQVYDDQTRPLVEYYSSWAAQANAADKVKAPAYRKVSGTGSVEDITTSIFAQLK</sequence>